<reference key="1">
    <citation type="journal article" date="2002" name="Am. J. Physiol.">
        <title>Two nitridergic peptides are encoded by the gene capability in Drosophila melanogaster.</title>
        <authorList>
            <person name="Kean L."/>
            <person name="Cazenave W."/>
            <person name="Costes L."/>
            <person name="Broderick K.E."/>
            <person name="Graham S."/>
            <person name="Pollock V.P."/>
            <person name="Davies S.A."/>
            <person name="Veenstra J.A."/>
            <person name="Dow J.A."/>
        </authorList>
    </citation>
    <scope>NUCLEOTIDE SEQUENCE [MRNA]</scope>
    <scope>FUNCTION</scope>
    <scope>SUBCELLULAR LOCATION</scope>
    <scope>TISSUE SPECIFICITY</scope>
</reference>
<reference key="2">
    <citation type="submission" date="2000-11" db="EMBL/GenBank/DDBJ databases">
        <authorList>
            <person name="Vanden Broeck J.J.M."/>
        </authorList>
    </citation>
    <scope>NUCLEOTIDE SEQUENCE [MRNA]</scope>
</reference>
<reference key="3">
    <citation type="journal article" date="2000" name="Science">
        <title>The genome sequence of Drosophila melanogaster.</title>
        <authorList>
            <person name="Adams M.D."/>
            <person name="Celniker S.E."/>
            <person name="Holt R.A."/>
            <person name="Evans C.A."/>
            <person name="Gocayne J.D."/>
            <person name="Amanatides P.G."/>
            <person name="Scherer S.E."/>
            <person name="Li P.W."/>
            <person name="Hoskins R.A."/>
            <person name="Galle R.F."/>
            <person name="George R.A."/>
            <person name="Lewis S.E."/>
            <person name="Richards S."/>
            <person name="Ashburner M."/>
            <person name="Henderson S.N."/>
            <person name="Sutton G.G."/>
            <person name="Wortman J.R."/>
            <person name="Yandell M.D."/>
            <person name="Zhang Q."/>
            <person name="Chen L.X."/>
            <person name="Brandon R.C."/>
            <person name="Rogers Y.-H.C."/>
            <person name="Blazej R.G."/>
            <person name="Champe M."/>
            <person name="Pfeiffer B.D."/>
            <person name="Wan K.H."/>
            <person name="Doyle C."/>
            <person name="Baxter E.G."/>
            <person name="Helt G."/>
            <person name="Nelson C.R."/>
            <person name="Miklos G.L.G."/>
            <person name="Abril J.F."/>
            <person name="Agbayani A."/>
            <person name="An H.-J."/>
            <person name="Andrews-Pfannkoch C."/>
            <person name="Baldwin D."/>
            <person name="Ballew R.M."/>
            <person name="Basu A."/>
            <person name="Baxendale J."/>
            <person name="Bayraktaroglu L."/>
            <person name="Beasley E.M."/>
            <person name="Beeson K.Y."/>
            <person name="Benos P.V."/>
            <person name="Berman B.P."/>
            <person name="Bhandari D."/>
            <person name="Bolshakov S."/>
            <person name="Borkova D."/>
            <person name="Botchan M.R."/>
            <person name="Bouck J."/>
            <person name="Brokstein P."/>
            <person name="Brottier P."/>
            <person name="Burtis K.C."/>
            <person name="Busam D.A."/>
            <person name="Butler H."/>
            <person name="Cadieu E."/>
            <person name="Center A."/>
            <person name="Chandra I."/>
            <person name="Cherry J.M."/>
            <person name="Cawley S."/>
            <person name="Dahlke C."/>
            <person name="Davenport L.B."/>
            <person name="Davies P."/>
            <person name="de Pablos B."/>
            <person name="Delcher A."/>
            <person name="Deng Z."/>
            <person name="Mays A.D."/>
            <person name="Dew I."/>
            <person name="Dietz S.M."/>
            <person name="Dodson K."/>
            <person name="Doup L.E."/>
            <person name="Downes M."/>
            <person name="Dugan-Rocha S."/>
            <person name="Dunkov B.C."/>
            <person name="Dunn P."/>
            <person name="Durbin K.J."/>
            <person name="Evangelista C.C."/>
            <person name="Ferraz C."/>
            <person name="Ferriera S."/>
            <person name="Fleischmann W."/>
            <person name="Fosler C."/>
            <person name="Gabrielian A.E."/>
            <person name="Garg N.S."/>
            <person name="Gelbart W.M."/>
            <person name="Glasser K."/>
            <person name="Glodek A."/>
            <person name="Gong F."/>
            <person name="Gorrell J.H."/>
            <person name="Gu Z."/>
            <person name="Guan P."/>
            <person name="Harris M."/>
            <person name="Harris N.L."/>
            <person name="Harvey D.A."/>
            <person name="Heiman T.J."/>
            <person name="Hernandez J.R."/>
            <person name="Houck J."/>
            <person name="Hostin D."/>
            <person name="Houston K.A."/>
            <person name="Howland T.J."/>
            <person name="Wei M.-H."/>
            <person name="Ibegwam C."/>
            <person name="Jalali M."/>
            <person name="Kalush F."/>
            <person name="Karpen G.H."/>
            <person name="Ke Z."/>
            <person name="Kennison J.A."/>
            <person name="Ketchum K.A."/>
            <person name="Kimmel B.E."/>
            <person name="Kodira C.D."/>
            <person name="Kraft C.L."/>
            <person name="Kravitz S."/>
            <person name="Kulp D."/>
            <person name="Lai Z."/>
            <person name="Lasko P."/>
            <person name="Lei Y."/>
            <person name="Levitsky A.A."/>
            <person name="Li J.H."/>
            <person name="Li Z."/>
            <person name="Liang Y."/>
            <person name="Lin X."/>
            <person name="Liu X."/>
            <person name="Mattei B."/>
            <person name="McIntosh T.C."/>
            <person name="McLeod M.P."/>
            <person name="McPherson D."/>
            <person name="Merkulov G."/>
            <person name="Milshina N.V."/>
            <person name="Mobarry C."/>
            <person name="Morris J."/>
            <person name="Moshrefi A."/>
            <person name="Mount S.M."/>
            <person name="Moy M."/>
            <person name="Murphy B."/>
            <person name="Murphy L."/>
            <person name="Muzny D.M."/>
            <person name="Nelson D.L."/>
            <person name="Nelson D.R."/>
            <person name="Nelson K.A."/>
            <person name="Nixon K."/>
            <person name="Nusskern D.R."/>
            <person name="Pacleb J.M."/>
            <person name="Palazzolo M."/>
            <person name="Pittman G.S."/>
            <person name="Pan S."/>
            <person name="Pollard J."/>
            <person name="Puri V."/>
            <person name="Reese M.G."/>
            <person name="Reinert K."/>
            <person name="Remington K."/>
            <person name="Saunders R.D.C."/>
            <person name="Scheeler F."/>
            <person name="Shen H."/>
            <person name="Shue B.C."/>
            <person name="Siden-Kiamos I."/>
            <person name="Simpson M."/>
            <person name="Skupski M.P."/>
            <person name="Smith T.J."/>
            <person name="Spier E."/>
            <person name="Spradling A.C."/>
            <person name="Stapleton M."/>
            <person name="Strong R."/>
            <person name="Sun E."/>
            <person name="Svirskas R."/>
            <person name="Tector C."/>
            <person name="Turner R."/>
            <person name="Venter E."/>
            <person name="Wang A.H."/>
            <person name="Wang X."/>
            <person name="Wang Z.-Y."/>
            <person name="Wassarman D.A."/>
            <person name="Weinstock G.M."/>
            <person name="Weissenbach J."/>
            <person name="Williams S.M."/>
            <person name="Woodage T."/>
            <person name="Worley K.C."/>
            <person name="Wu D."/>
            <person name="Yang S."/>
            <person name="Yao Q.A."/>
            <person name="Ye J."/>
            <person name="Yeh R.-F."/>
            <person name="Zaveri J.S."/>
            <person name="Zhan M."/>
            <person name="Zhang G."/>
            <person name="Zhao Q."/>
            <person name="Zheng L."/>
            <person name="Zheng X.H."/>
            <person name="Zhong F.N."/>
            <person name="Zhong W."/>
            <person name="Zhou X."/>
            <person name="Zhu S.C."/>
            <person name="Zhu X."/>
            <person name="Smith H.O."/>
            <person name="Gibbs R.A."/>
            <person name="Myers E.W."/>
            <person name="Rubin G.M."/>
            <person name="Venter J.C."/>
        </authorList>
    </citation>
    <scope>NUCLEOTIDE SEQUENCE [LARGE SCALE GENOMIC DNA]</scope>
    <source>
        <strain>Berkeley</strain>
    </source>
</reference>
<reference key="4">
    <citation type="journal article" date="2002" name="Genome Biol.">
        <title>Annotation of the Drosophila melanogaster euchromatic genome: a systematic review.</title>
        <authorList>
            <person name="Misra S."/>
            <person name="Crosby M.A."/>
            <person name="Mungall C.J."/>
            <person name="Matthews B.B."/>
            <person name="Campbell K.S."/>
            <person name="Hradecky P."/>
            <person name="Huang Y."/>
            <person name="Kaminker J.S."/>
            <person name="Millburn G.H."/>
            <person name="Prochnik S.E."/>
            <person name="Smith C.D."/>
            <person name="Tupy J.L."/>
            <person name="Whitfield E.J."/>
            <person name="Bayraktaroglu L."/>
            <person name="Berman B.P."/>
            <person name="Bettencourt B.R."/>
            <person name="Celniker S.E."/>
            <person name="de Grey A.D.N.J."/>
            <person name="Drysdale R.A."/>
            <person name="Harris N.L."/>
            <person name="Richter J."/>
            <person name="Russo S."/>
            <person name="Schroeder A.J."/>
            <person name="Shu S.Q."/>
            <person name="Stapleton M."/>
            <person name="Yamada C."/>
            <person name="Ashburner M."/>
            <person name="Gelbart W.M."/>
            <person name="Rubin G.M."/>
            <person name="Lewis S.E."/>
        </authorList>
    </citation>
    <scope>GENOME REANNOTATION</scope>
    <source>
        <strain>Berkeley</strain>
    </source>
</reference>
<reference key="5">
    <citation type="journal article" date="2002" name="Genome Biol.">
        <title>A Drosophila full-length cDNA resource.</title>
        <authorList>
            <person name="Stapleton M."/>
            <person name="Carlson J.W."/>
            <person name="Brokstein P."/>
            <person name="Yu C."/>
            <person name="Champe M."/>
            <person name="George R.A."/>
            <person name="Guarin H."/>
            <person name="Kronmiller B."/>
            <person name="Pacleb J.M."/>
            <person name="Park S."/>
            <person name="Wan K.H."/>
            <person name="Rubin G.M."/>
            <person name="Celniker S.E."/>
        </authorList>
    </citation>
    <scope>NUCLEOTIDE SEQUENCE [LARGE SCALE MRNA]</scope>
    <source>
        <strain>Berkeley</strain>
        <tissue>Head</tissue>
    </source>
</reference>
<reference key="6">
    <citation type="journal article" date="2002" name="J. Biol. Chem.">
        <title>Peptidomics of the larval Drosophila melanogaster central nervous system.</title>
        <authorList>
            <person name="Baggerman G."/>
            <person name="Cerstiaens A."/>
            <person name="De Loof A."/>
            <person name="Schoofs L."/>
        </authorList>
    </citation>
    <scope>PROTEIN SEQUENCE OF 31-42 AND 83-92</scope>
    <scope>AMIDATION AT VAL-42; VAL-92 AND LEU-130</scope>
    <source>
        <tissue>Larva</tissue>
    </source>
</reference>
<reference key="7">
    <citation type="journal article" date="2002" name="Proc. Natl. Acad. Sci. U.S.A.">
        <title>Identification of G protein-coupled receptors for Drosophila PRXamide peptides, CCAP, corazonin, and AKH supports a theory of ligand-receptor coevolution.</title>
        <authorList>
            <person name="Park Y."/>
            <person name="Kim Y.-J."/>
            <person name="Adams M.E."/>
        </authorList>
    </citation>
    <scope>FUNCTION</scope>
    <source>
        <strain>Canton-S</strain>
    </source>
</reference>
<reference key="8">
    <citation type="journal article" date="2002" name="Biochem. Biophys. Res. Commun.">
        <title>Molecular cloning and functional expression of a Drosophila receptor for the neuropeptides capa-1 and -2.</title>
        <authorList>
            <person name="Iversen A."/>
            <person name="Cazzamali G."/>
            <person name="Williamson M."/>
            <person name="Hauser F."/>
            <person name="Grimmelikhuijzen C.J.P."/>
        </authorList>
    </citation>
    <scope>FUNCTION</scope>
</reference>
<reference key="9">
    <citation type="journal article" date="2001" name="Peptides">
        <title>Neuropeptides and their precursors in the fruitfly, Drosophila melanogaster.</title>
        <authorList>
            <person name="Vanden Broeck J.J.M."/>
        </authorList>
    </citation>
    <scope>REVIEW</scope>
</reference>
<reference key="10">
    <citation type="journal article" date="2005" name="Biochem. Biophys. Res. Commun.">
        <title>The Drosophila gene CG9918 codes for a pyrokinin-1 receptor.</title>
        <authorList>
            <person name="Cazzamali G."/>
            <person name="Torp M."/>
            <person name="Hauser F."/>
            <person name="Williamson M."/>
            <person name="Grimmelikhuijzen C.J."/>
        </authorList>
    </citation>
    <scope>FUNCTION</scope>
</reference>
<evidence type="ECO:0000255" key="1"/>
<evidence type="ECO:0000269" key="2">
    <source>
    </source>
</evidence>
<evidence type="ECO:0000269" key="3">
    <source>
    </source>
</evidence>
<evidence type="ECO:0000269" key="4">
    <source>
    </source>
</evidence>
<evidence type="ECO:0000269" key="5">
    <source>
    </source>
</evidence>
<evidence type="ECO:0000269" key="6">
    <source>
    </source>
</evidence>
<evidence type="ECO:0000305" key="7"/>
<sequence>MKSMLVHIVLVIFIIAEFSTAETDHDKNRRGANMGLYAFPRVGRSDPSLANSLRDGLEAGVLDGIYGDASQEDYNEADFQKKASGLVAFPRVGRGDAELRKWAHLLALQQVLDKRTGPSASSGLWFGPRLGKRSVDAKSFADISKGQKELN</sequence>
<comment type="function">
    <text evidence="2 4 5 6">CAP-1 and CAP-2, but not CAP-3 are ligands for the Capa receptor (PubMed:12177421, PubMed:12459185). CAP-1 and CAP-2 are probably components of the signal transduction pathway that leads to Malpighian tubule fluid secretion via the second messenger nitric oxide (PubMed:11959669). CAP-3 is a ligand for the PK1-R G-protein coupled receptor (PubMed:16054112).</text>
</comment>
<comment type="subcellular location">
    <subcellularLocation>
        <location evidence="2">Secreted</location>
    </subcellularLocation>
    <text>Released from the neuroendocrine cells into the hemolymph.</text>
</comment>
<comment type="tissue specificity">
    <text evidence="2">In larvae, the precursor peptide is exclusively present in a single pair of neuroendocrine cells in the labial neuromere (subesophageal ganglion) and three pairs of cells in the ventral ganglion abdominal neuromeres.</text>
</comment>
<comment type="similarity">
    <text evidence="7">Belongs to the pyrokinin family.</text>
</comment>
<proteinExistence type="evidence at protein level"/>
<organism>
    <name type="scientific">Drosophila melanogaster</name>
    <name type="common">Fruit fly</name>
    <dbReference type="NCBI Taxonomy" id="7227"/>
    <lineage>
        <taxon>Eukaryota</taxon>
        <taxon>Metazoa</taxon>
        <taxon>Ecdysozoa</taxon>
        <taxon>Arthropoda</taxon>
        <taxon>Hexapoda</taxon>
        <taxon>Insecta</taxon>
        <taxon>Pterygota</taxon>
        <taxon>Neoptera</taxon>
        <taxon>Endopterygota</taxon>
        <taxon>Diptera</taxon>
        <taxon>Brachycera</taxon>
        <taxon>Muscomorpha</taxon>
        <taxon>Ephydroidea</taxon>
        <taxon>Drosophilidae</taxon>
        <taxon>Drosophila</taxon>
        <taxon>Sophophora</taxon>
    </lineage>
</organism>
<name>CP2B_DROME</name>
<dbReference type="EMBL" id="AF203878">
    <property type="protein sequence ID" value="AAF62876.1"/>
    <property type="molecule type" value="mRNA"/>
</dbReference>
<dbReference type="EMBL" id="AJ291724">
    <property type="protein sequence ID" value="CAC17603.1"/>
    <property type="molecule type" value="mRNA"/>
</dbReference>
<dbReference type="EMBL" id="AE014297">
    <property type="protein sequence ID" value="AAF56969.2"/>
    <property type="molecule type" value="Genomic_DNA"/>
</dbReference>
<dbReference type="EMBL" id="AY069234">
    <property type="protein sequence ID" value="AAL39379.1"/>
    <property type="molecule type" value="mRNA"/>
</dbReference>
<dbReference type="RefSeq" id="NP_524552.1">
    <property type="nucleotide sequence ID" value="NM_079828.3"/>
</dbReference>
<dbReference type="BioGRID" id="68398">
    <property type="interactions" value="7"/>
</dbReference>
<dbReference type="DIP" id="DIP-22273N"/>
<dbReference type="FunCoup" id="Q9NIP6">
    <property type="interactions" value="123"/>
</dbReference>
<dbReference type="IntAct" id="Q9NIP6">
    <property type="interactions" value="2"/>
</dbReference>
<dbReference type="STRING" id="7227.FBpp0084880"/>
<dbReference type="PaxDb" id="7227-FBpp0084880"/>
<dbReference type="DNASU" id="43541"/>
<dbReference type="EnsemblMetazoa" id="FBtr0085514">
    <property type="protein sequence ID" value="FBpp0084880"/>
    <property type="gene ID" value="FBgn0039722"/>
</dbReference>
<dbReference type="GeneID" id="43541"/>
<dbReference type="KEGG" id="dme:Dmel_CG15520"/>
<dbReference type="AGR" id="FB:FBgn0039722"/>
<dbReference type="CTD" id="43541"/>
<dbReference type="FlyBase" id="FBgn0039722">
    <property type="gene designation" value="Capa"/>
</dbReference>
<dbReference type="VEuPathDB" id="VectorBase:FBgn0039722"/>
<dbReference type="eggNOG" id="ENOG502TAG0">
    <property type="taxonomic scope" value="Eukaryota"/>
</dbReference>
<dbReference type="HOGENOM" id="CLU_1697372_0_0_1"/>
<dbReference type="InParanoid" id="Q9NIP6"/>
<dbReference type="OMA" id="SMLVHIV"/>
<dbReference type="OrthoDB" id="6430009at2759"/>
<dbReference type="PhylomeDB" id="Q9NIP6"/>
<dbReference type="BioGRID-ORCS" id="43541">
    <property type="hits" value="0 hits in 1 CRISPR screen"/>
</dbReference>
<dbReference type="GenomeRNAi" id="43541"/>
<dbReference type="PRO" id="PR:Q9NIP6"/>
<dbReference type="Proteomes" id="UP000000803">
    <property type="component" value="Chromosome 3R"/>
</dbReference>
<dbReference type="Bgee" id="FBgn0039722">
    <property type="expression patterns" value="Expressed in adult capability neuron in brain and 18 other cell types or tissues"/>
</dbReference>
<dbReference type="ExpressionAtlas" id="Q9NIP6">
    <property type="expression patterns" value="baseline and differential"/>
</dbReference>
<dbReference type="GO" id="GO:0005576">
    <property type="term" value="C:extracellular region"/>
    <property type="evidence" value="ECO:0000314"/>
    <property type="project" value="UniProtKB"/>
</dbReference>
<dbReference type="GO" id="GO:0005615">
    <property type="term" value="C:extracellular space"/>
    <property type="evidence" value="ECO:0000314"/>
    <property type="project" value="FlyBase"/>
</dbReference>
<dbReference type="GO" id="GO:0008613">
    <property type="term" value="F:diuretic hormone activity"/>
    <property type="evidence" value="ECO:0000314"/>
    <property type="project" value="FlyBase"/>
</dbReference>
<dbReference type="GO" id="GO:0016084">
    <property type="term" value="F:myostimulatory hormone activity"/>
    <property type="evidence" value="ECO:0000315"/>
    <property type="project" value="UniProtKB"/>
</dbReference>
<dbReference type="GO" id="GO:0005184">
    <property type="term" value="F:neuropeptide hormone activity"/>
    <property type="evidence" value="ECO:0000315"/>
    <property type="project" value="UniProtKB"/>
</dbReference>
<dbReference type="GO" id="GO:0071855">
    <property type="term" value="F:neuropeptide receptor binding"/>
    <property type="evidence" value="ECO:0000353"/>
    <property type="project" value="FlyBase"/>
</dbReference>
<dbReference type="GO" id="GO:0042045">
    <property type="term" value="P:epithelial fluid transport"/>
    <property type="evidence" value="ECO:0000314"/>
    <property type="project" value="FlyBase"/>
</dbReference>
<dbReference type="GO" id="GO:0006812">
    <property type="term" value="P:monoatomic cation transport"/>
    <property type="evidence" value="ECO:0000304"/>
    <property type="project" value="FlyBase"/>
</dbReference>
<dbReference type="GO" id="GO:0007218">
    <property type="term" value="P:neuropeptide signaling pathway"/>
    <property type="evidence" value="ECO:0000314"/>
    <property type="project" value="FlyBase"/>
</dbReference>
<dbReference type="GO" id="GO:0038060">
    <property type="term" value="P:nitric oxide-cGMP-mediated signaling"/>
    <property type="evidence" value="ECO:0000314"/>
    <property type="project" value="FlyBase"/>
</dbReference>
<dbReference type="GO" id="GO:0007204">
    <property type="term" value="P:positive regulation of cytosolic calcium ion concentration"/>
    <property type="evidence" value="ECO:0000314"/>
    <property type="project" value="FlyBase"/>
</dbReference>
<dbReference type="InterPro" id="IPR013231">
    <property type="entry name" value="Periviscerokinin"/>
</dbReference>
<dbReference type="Pfam" id="PF08259">
    <property type="entry name" value="Periviscerokin"/>
    <property type="match status" value="2"/>
</dbReference>
<dbReference type="PROSITE" id="PS00539">
    <property type="entry name" value="PYROKININ"/>
    <property type="match status" value="1"/>
</dbReference>
<gene>
    <name type="primary">Capa</name>
    <name type="synonym">MT-CAP2b</name>
    <name type="ORF">CG15520</name>
</gene>
<keyword id="KW-0027">Amidation</keyword>
<keyword id="KW-0165">Cleavage on pair of basic residues</keyword>
<keyword id="KW-0903">Direct protein sequencing</keyword>
<keyword id="KW-0527">Neuropeptide</keyword>
<keyword id="KW-1185">Reference proteome</keyword>
<keyword id="KW-0964">Secreted</keyword>
<keyword id="KW-0732">Signal</keyword>
<feature type="signal peptide" evidence="1">
    <location>
        <begin position="1"/>
        <end position="21"/>
    </location>
</feature>
<feature type="propeptide" id="PRO_0000029901">
    <location>
        <begin position="22"/>
        <end position="28"/>
    </location>
</feature>
<feature type="peptide" id="PRO_0000029902" description="CAP-1">
    <location>
        <begin position="31"/>
        <end position="42"/>
    </location>
</feature>
<feature type="propeptide" id="PRO_0000029903">
    <location>
        <begin position="45"/>
        <end position="80"/>
    </location>
</feature>
<feature type="peptide" id="PRO_0000029904" description="CAP-2">
    <location>
        <begin position="83"/>
        <end position="92"/>
    </location>
</feature>
<feature type="propeptide" id="PRO_0000029905">
    <location>
        <begin position="95"/>
        <end position="113"/>
    </location>
</feature>
<feature type="peptide" id="PRO_0000029906" description="CAP-3">
    <location>
        <begin position="116"/>
        <end position="130"/>
    </location>
</feature>
<feature type="propeptide" id="PRO_0000029907">
    <location>
        <begin position="134"/>
        <end position="151"/>
    </location>
</feature>
<feature type="modified residue" description="Valine amide" evidence="3">
    <location>
        <position position="42"/>
    </location>
</feature>
<feature type="modified residue" description="Valine amide" evidence="3">
    <location>
        <position position="92"/>
    </location>
</feature>
<feature type="modified residue" description="Leucine amide" evidence="3">
    <location>
        <position position="130"/>
    </location>
</feature>
<protein>
    <recommendedName>
        <fullName>Cardio acceleratory peptide 2b</fullName>
    </recommendedName>
    <alternativeName>
        <fullName>Capability protein</fullName>
    </alternativeName>
    <alternativeName>
        <fullName>Myotropin-CAP2b-like protein</fullName>
    </alternativeName>
    <component>
        <recommendedName>
            <fullName>CAP-1</fullName>
        </recommendedName>
        <alternativeName>
            <fullName>CAP2b-1</fullName>
        </alternativeName>
        <alternativeName>
            <fullName>Capa-1</fullName>
        </alternativeName>
    </component>
    <component>
        <recommendedName>
            <fullName>CAP-2</fullName>
        </recommendedName>
        <alternativeName>
            <fullName>CAP2b-2</fullName>
        </alternativeName>
        <alternativeName>
            <fullName>Capa-2</fullName>
        </alternativeName>
    </component>
    <component>
        <recommendedName>
            <fullName>CAP-3</fullName>
        </recommendedName>
        <alternativeName>
            <fullName>CAP2b-3</fullName>
        </alternativeName>
        <alternativeName>
            <fullName>Capa-3</fullName>
        </alternativeName>
        <alternativeName>
            <fullName>Myotropin</fullName>
        </alternativeName>
        <alternativeName>
            <fullName>Pyrokinin-1</fullName>
        </alternativeName>
    </component>
</protein>
<accession>Q9NIP6</accession>
<accession>Q9VAE2</accession>